<proteinExistence type="evidence at transcript level"/>
<evidence type="ECO:0000250" key="1">
    <source>
        <dbReference type="UniProtKB" id="O08962"/>
    </source>
</evidence>
<evidence type="ECO:0000250" key="2">
    <source>
        <dbReference type="UniProtKB" id="O35219"/>
    </source>
</evidence>
<evidence type="ECO:0000250" key="3">
    <source>
        <dbReference type="UniProtKB" id="Q12809"/>
    </source>
</evidence>
<evidence type="ECO:0000250" key="4">
    <source>
        <dbReference type="UniProtKB" id="Q63472"/>
    </source>
</evidence>
<evidence type="ECO:0000255" key="5"/>
<evidence type="ECO:0000255" key="6">
    <source>
        <dbReference type="PROSITE-ProRule" id="PRU00060"/>
    </source>
</evidence>
<evidence type="ECO:0000255" key="7">
    <source>
        <dbReference type="PROSITE-ProRule" id="PRU00140"/>
    </source>
</evidence>
<evidence type="ECO:0000255" key="8">
    <source>
        <dbReference type="PROSITE-ProRule" id="PRU00141"/>
    </source>
</evidence>
<evidence type="ECO:0000256" key="9">
    <source>
        <dbReference type="SAM" id="MobiDB-lite"/>
    </source>
</evidence>
<evidence type="ECO:0000269" key="10">
    <source>
    </source>
</evidence>
<evidence type="ECO:0000303" key="11">
    <source>
    </source>
</evidence>
<evidence type="ECO:0000303" key="12">
    <source>
    </source>
</evidence>
<evidence type="ECO:0000305" key="13"/>
<dbReference type="EMBL" id="AJ243344">
    <property type="protein sequence ID" value="CAB64868.1"/>
    <property type="molecule type" value="mRNA"/>
</dbReference>
<dbReference type="EMBL" id="U75213">
    <property type="protein sequence ID" value="AAC48722.1"/>
    <property type="molecule type" value="mRNA"/>
</dbReference>
<dbReference type="EMBL" id="AF017429">
    <property type="protein sequence ID" value="AAB70524.1"/>
    <property type="molecule type" value="mRNA"/>
</dbReference>
<dbReference type="RefSeq" id="NP_001003145.1">
    <property type="nucleotide sequence ID" value="NM_001003145.1"/>
</dbReference>
<dbReference type="BMRB" id="Q9TSZ3"/>
<dbReference type="SMR" id="Q9TSZ3"/>
<dbReference type="FunCoup" id="Q9TSZ3">
    <property type="interactions" value="187"/>
</dbReference>
<dbReference type="STRING" id="9615.ENSCAFP00000035367"/>
<dbReference type="BindingDB" id="Q9TSZ3"/>
<dbReference type="ChEMBL" id="CHEMBL3085616"/>
<dbReference type="GlyCosmos" id="Q9TSZ3">
    <property type="glycosylation" value="1 site, No reported glycans"/>
</dbReference>
<dbReference type="PaxDb" id="9612-ENSCAFP00000035370"/>
<dbReference type="Ensembl" id="ENSCAFT00000039504.3">
    <property type="protein sequence ID" value="ENSCAFP00000035367.3"/>
    <property type="gene ID" value="ENSCAFG00000025442.4"/>
</dbReference>
<dbReference type="Ensembl" id="ENSCAFT00030045812.1">
    <property type="protein sequence ID" value="ENSCAFP00030040025.1"/>
    <property type="gene ID" value="ENSCAFG00030024832.1"/>
</dbReference>
<dbReference type="Ensembl" id="ENSCAFT00040008538.1">
    <property type="protein sequence ID" value="ENSCAFP00040007416.1"/>
    <property type="gene ID" value="ENSCAFG00040004496.1"/>
</dbReference>
<dbReference type="Ensembl" id="ENSCAFT00845017520.1">
    <property type="protein sequence ID" value="ENSCAFP00845013635.1"/>
    <property type="gene ID" value="ENSCAFG00845009911.1"/>
</dbReference>
<dbReference type="GeneID" id="403761"/>
<dbReference type="KEGG" id="cfa:403761"/>
<dbReference type="CTD" id="3757"/>
<dbReference type="VEuPathDB" id="HostDB:ENSCAFG00845009911"/>
<dbReference type="VGNC" id="VGNC:42248">
    <property type="gene designation" value="KCNH2"/>
</dbReference>
<dbReference type="eggNOG" id="KOG0498">
    <property type="taxonomic scope" value="Eukaryota"/>
</dbReference>
<dbReference type="GeneTree" id="ENSGT00940000159846"/>
<dbReference type="InParanoid" id="Q9TSZ3"/>
<dbReference type="OrthoDB" id="432483at2759"/>
<dbReference type="Reactome" id="R-CFA-1296072">
    <property type="pathway name" value="Voltage gated Potassium channels"/>
</dbReference>
<dbReference type="Reactome" id="R-CFA-5576890">
    <property type="pathway name" value="Phase 3 - rapid repolarisation"/>
</dbReference>
<dbReference type="Proteomes" id="UP000002254">
    <property type="component" value="Chromosome 16"/>
</dbReference>
<dbReference type="Proteomes" id="UP000694429">
    <property type="component" value="Chromosome 16"/>
</dbReference>
<dbReference type="Proteomes" id="UP000694542">
    <property type="component" value="Chromosome 16"/>
</dbReference>
<dbReference type="Proteomes" id="UP000805418">
    <property type="component" value="Chromosome 16"/>
</dbReference>
<dbReference type="GO" id="GO:0009986">
    <property type="term" value="C:cell surface"/>
    <property type="evidence" value="ECO:0007669"/>
    <property type="project" value="Ensembl"/>
</dbReference>
<dbReference type="GO" id="GO:1902937">
    <property type="term" value="C:inward rectifier potassium channel complex"/>
    <property type="evidence" value="ECO:0007669"/>
    <property type="project" value="Ensembl"/>
</dbReference>
<dbReference type="GO" id="GO:0048471">
    <property type="term" value="C:perinuclear region of cytoplasm"/>
    <property type="evidence" value="ECO:0007669"/>
    <property type="project" value="Ensembl"/>
</dbReference>
<dbReference type="GO" id="GO:0005886">
    <property type="term" value="C:plasma membrane"/>
    <property type="evidence" value="ECO:0000318"/>
    <property type="project" value="GO_Central"/>
</dbReference>
<dbReference type="GO" id="GO:0005251">
    <property type="term" value="F:delayed rectifier potassium channel activity"/>
    <property type="evidence" value="ECO:0007669"/>
    <property type="project" value="Ensembl"/>
</dbReference>
<dbReference type="GO" id="GO:0005242">
    <property type="term" value="F:inward rectifier potassium channel activity"/>
    <property type="evidence" value="ECO:0000314"/>
    <property type="project" value="UniProtKB"/>
</dbReference>
<dbReference type="GO" id="GO:0042803">
    <property type="term" value="F:protein homodimerization activity"/>
    <property type="evidence" value="ECO:0007669"/>
    <property type="project" value="Ensembl"/>
</dbReference>
<dbReference type="GO" id="GO:0097110">
    <property type="term" value="F:scaffold protein binding"/>
    <property type="evidence" value="ECO:0007669"/>
    <property type="project" value="Ensembl"/>
</dbReference>
<dbReference type="GO" id="GO:0000976">
    <property type="term" value="F:transcription cis-regulatory region binding"/>
    <property type="evidence" value="ECO:0007669"/>
    <property type="project" value="Ensembl"/>
</dbReference>
<dbReference type="GO" id="GO:0031625">
    <property type="term" value="F:ubiquitin protein ligase binding"/>
    <property type="evidence" value="ECO:0007669"/>
    <property type="project" value="Ensembl"/>
</dbReference>
<dbReference type="GO" id="GO:0005249">
    <property type="term" value="F:voltage-gated potassium channel activity"/>
    <property type="evidence" value="ECO:0000250"/>
    <property type="project" value="UniProtKB"/>
</dbReference>
<dbReference type="GO" id="GO:1902282">
    <property type="term" value="F:voltage-gated potassium channel activity involved in ventricular cardiac muscle cell action potential repolarization"/>
    <property type="evidence" value="ECO:0007669"/>
    <property type="project" value="Ensembl"/>
</dbReference>
<dbReference type="GO" id="GO:0071466">
    <property type="term" value="P:cellular response to xenobiotic stimulus"/>
    <property type="evidence" value="ECO:0007669"/>
    <property type="project" value="Ensembl"/>
</dbReference>
<dbReference type="GO" id="GO:0086010">
    <property type="term" value="P:membrane depolarization during action potential"/>
    <property type="evidence" value="ECO:0007669"/>
    <property type="project" value="Ensembl"/>
</dbReference>
<dbReference type="GO" id="GO:0086013">
    <property type="term" value="P:membrane repolarization during cardiac muscle cell action potential"/>
    <property type="evidence" value="ECO:0000318"/>
    <property type="project" value="GO_Central"/>
</dbReference>
<dbReference type="GO" id="GO:1903765">
    <property type="term" value="P:negative regulation of potassium ion export across plasma membrane"/>
    <property type="evidence" value="ECO:0007669"/>
    <property type="project" value="Ensembl"/>
</dbReference>
<dbReference type="GO" id="GO:0045893">
    <property type="term" value="P:positive regulation of DNA-templated transcription"/>
    <property type="evidence" value="ECO:0007669"/>
    <property type="project" value="Ensembl"/>
</dbReference>
<dbReference type="GO" id="GO:1901381">
    <property type="term" value="P:positive regulation of potassium ion transmembrane transport"/>
    <property type="evidence" value="ECO:0007669"/>
    <property type="project" value="Ensembl"/>
</dbReference>
<dbReference type="GO" id="GO:0097623">
    <property type="term" value="P:potassium ion export across plasma membrane"/>
    <property type="evidence" value="ECO:0007669"/>
    <property type="project" value="Ensembl"/>
</dbReference>
<dbReference type="GO" id="GO:0055075">
    <property type="term" value="P:potassium ion homeostasis"/>
    <property type="evidence" value="ECO:0007669"/>
    <property type="project" value="Ensembl"/>
</dbReference>
<dbReference type="GO" id="GO:1990573">
    <property type="term" value="P:potassium ion import across plasma membrane"/>
    <property type="evidence" value="ECO:0007669"/>
    <property type="project" value="Ensembl"/>
</dbReference>
<dbReference type="GO" id="GO:0071805">
    <property type="term" value="P:potassium ion transmembrane transport"/>
    <property type="evidence" value="ECO:0000318"/>
    <property type="project" value="GO_Central"/>
</dbReference>
<dbReference type="GO" id="GO:0006813">
    <property type="term" value="P:potassium ion transport"/>
    <property type="evidence" value="ECO:0000314"/>
    <property type="project" value="UniProtKB"/>
</dbReference>
<dbReference type="GO" id="GO:0086091">
    <property type="term" value="P:regulation of heart rate by cardiac conduction"/>
    <property type="evidence" value="ECO:0000318"/>
    <property type="project" value="GO_Central"/>
</dbReference>
<dbReference type="GO" id="GO:0060307">
    <property type="term" value="P:regulation of ventricular cardiac muscle cell membrane repolarization"/>
    <property type="evidence" value="ECO:0000318"/>
    <property type="project" value="GO_Central"/>
</dbReference>
<dbReference type="CDD" id="cd00038">
    <property type="entry name" value="CAP_ED"/>
    <property type="match status" value="1"/>
</dbReference>
<dbReference type="CDD" id="cd00130">
    <property type="entry name" value="PAS"/>
    <property type="match status" value="1"/>
</dbReference>
<dbReference type="FunFam" id="1.10.287.70:FF:000020">
    <property type="entry name" value="Potassium channel, voltage-gated eag-related subfamily H, member 7"/>
    <property type="match status" value="1"/>
</dbReference>
<dbReference type="FunFam" id="2.60.120.10:FF:000011">
    <property type="entry name" value="Potassium channel, voltage-gated eag-related subfamily H, member 7"/>
    <property type="match status" value="1"/>
</dbReference>
<dbReference type="FunFam" id="1.10.1200.260:FF:000001">
    <property type="entry name" value="Potassium voltage-gated channel subfamily H member 7"/>
    <property type="match status" value="1"/>
</dbReference>
<dbReference type="FunFam" id="3.30.450.20:FF:000001">
    <property type="entry name" value="Potassium voltage-gated channel subfamily H member 7"/>
    <property type="match status" value="1"/>
</dbReference>
<dbReference type="Gene3D" id="1.10.1200.260">
    <property type="match status" value="1"/>
</dbReference>
<dbReference type="Gene3D" id="1.10.287.70">
    <property type="match status" value="1"/>
</dbReference>
<dbReference type="Gene3D" id="2.60.120.10">
    <property type="entry name" value="Jelly Rolls"/>
    <property type="match status" value="1"/>
</dbReference>
<dbReference type="Gene3D" id="3.30.450.20">
    <property type="entry name" value="PAS domain"/>
    <property type="match status" value="1"/>
</dbReference>
<dbReference type="InterPro" id="IPR000595">
    <property type="entry name" value="cNMP-bd_dom"/>
</dbReference>
<dbReference type="InterPro" id="IPR018490">
    <property type="entry name" value="cNMP-bd_dom_sf"/>
</dbReference>
<dbReference type="InterPro" id="IPR005821">
    <property type="entry name" value="Ion_trans_dom"/>
</dbReference>
<dbReference type="InterPro" id="IPR003938">
    <property type="entry name" value="K_chnl_volt-dep_EAG/ELK/ERG"/>
</dbReference>
<dbReference type="InterPro" id="IPR003967">
    <property type="entry name" value="K_chnl_volt-dep_ERG"/>
</dbReference>
<dbReference type="InterPro" id="IPR050818">
    <property type="entry name" value="KCNH_animal-type"/>
</dbReference>
<dbReference type="InterPro" id="IPR001610">
    <property type="entry name" value="PAC"/>
</dbReference>
<dbReference type="InterPro" id="IPR000014">
    <property type="entry name" value="PAS"/>
</dbReference>
<dbReference type="InterPro" id="IPR000700">
    <property type="entry name" value="PAS-assoc_C"/>
</dbReference>
<dbReference type="InterPro" id="IPR035965">
    <property type="entry name" value="PAS-like_dom_sf"/>
</dbReference>
<dbReference type="InterPro" id="IPR014710">
    <property type="entry name" value="RmlC-like_jellyroll"/>
</dbReference>
<dbReference type="NCBIfam" id="TIGR00229">
    <property type="entry name" value="sensory_box"/>
    <property type="match status" value="1"/>
</dbReference>
<dbReference type="PANTHER" id="PTHR10217:SF506">
    <property type="entry name" value="POTASSIUM VOLTAGE-GATED CHANNEL SUBFAMILY H MEMBER 2"/>
    <property type="match status" value="1"/>
</dbReference>
<dbReference type="PANTHER" id="PTHR10217">
    <property type="entry name" value="VOLTAGE AND LIGAND GATED POTASSIUM CHANNEL"/>
    <property type="match status" value="1"/>
</dbReference>
<dbReference type="Pfam" id="PF00027">
    <property type="entry name" value="cNMP_binding"/>
    <property type="match status" value="1"/>
</dbReference>
<dbReference type="Pfam" id="PF00520">
    <property type="entry name" value="Ion_trans"/>
    <property type="match status" value="1"/>
</dbReference>
<dbReference type="Pfam" id="PF13426">
    <property type="entry name" value="PAS_9"/>
    <property type="match status" value="1"/>
</dbReference>
<dbReference type="PRINTS" id="PR01463">
    <property type="entry name" value="EAGCHANLFMLY"/>
</dbReference>
<dbReference type="PRINTS" id="PR01470">
    <property type="entry name" value="ERGCHANNEL"/>
</dbReference>
<dbReference type="SMART" id="SM00100">
    <property type="entry name" value="cNMP"/>
    <property type="match status" value="1"/>
</dbReference>
<dbReference type="SMART" id="SM00086">
    <property type="entry name" value="PAC"/>
    <property type="match status" value="1"/>
</dbReference>
<dbReference type="SUPFAM" id="SSF51206">
    <property type="entry name" value="cAMP-binding domain-like"/>
    <property type="match status" value="1"/>
</dbReference>
<dbReference type="SUPFAM" id="SSF55785">
    <property type="entry name" value="PYP-like sensor domain (PAS domain)"/>
    <property type="match status" value="1"/>
</dbReference>
<dbReference type="SUPFAM" id="SSF81324">
    <property type="entry name" value="Voltage-gated potassium channels"/>
    <property type="match status" value="1"/>
</dbReference>
<dbReference type="PROSITE" id="PS50042">
    <property type="entry name" value="CNMP_BINDING_3"/>
    <property type="match status" value="1"/>
</dbReference>
<dbReference type="PROSITE" id="PS50113">
    <property type="entry name" value="PAC"/>
    <property type="match status" value="1"/>
</dbReference>
<dbReference type="PROSITE" id="PS50112">
    <property type="entry name" value="PAS"/>
    <property type="match status" value="1"/>
</dbReference>
<keyword id="KW-1003">Cell membrane</keyword>
<keyword id="KW-0175">Coiled coil</keyword>
<keyword id="KW-0325">Glycoprotein</keyword>
<keyword id="KW-0407">Ion channel</keyword>
<keyword id="KW-0406">Ion transport</keyword>
<keyword id="KW-0472">Membrane</keyword>
<keyword id="KW-0488">Methylation</keyword>
<keyword id="KW-0597">Phosphoprotein</keyword>
<keyword id="KW-0630">Potassium</keyword>
<keyword id="KW-0631">Potassium channel</keyword>
<keyword id="KW-0633">Potassium transport</keyword>
<keyword id="KW-1185">Reference proteome</keyword>
<keyword id="KW-0812">Transmembrane</keyword>
<keyword id="KW-1133">Transmembrane helix</keyword>
<keyword id="KW-0813">Transport</keyword>
<keyword id="KW-0851">Voltage-gated channel</keyword>
<protein>
    <recommendedName>
        <fullName evidence="3">Voltage-gated inwardly rectifying potassium channel KCNH2</fullName>
    </recommendedName>
    <alternativeName>
        <fullName>Ether-a-go-go-related gene potassium channel 1</fullName>
        <shortName evidence="11">DERG</shortName>
        <shortName>ERG-1</shortName>
        <shortName>Eag-related protein 1</shortName>
        <shortName>Ether-a-go-go-related protein 1</shortName>
        <shortName evidence="12">c-ERG</shortName>
    </alternativeName>
    <alternativeName>
        <fullName>Potassium voltage-gated channel subfamily H member 2</fullName>
    </alternativeName>
    <alternativeName>
        <fullName>Voltage-gated potassium channel subunit Kv11.1</fullName>
    </alternativeName>
</protein>
<accession>Q9TSZ3</accession>
<accession>O02719</accession>
<accession>O18820</accession>
<comment type="function">
    <text evidence="3 10">Pore-forming (alpha) subunit of voltage-gated inwardly rectifying potassium channel (PubMed:11417212). Characterized by unusual gating kinetics by producing relatively small outward currents during membrane depolarization and large inward currents during subsequent repolarization which reflect a rapid inactivation during depolarization and quick recovery from inactivation but slow deactivation (closing) during repolarization (PubMed:11417212). Channel properties are modulated by cAMP and subunit assembly. Forms a stable complex with KCNE1 or KCNE2, and that this heteromultimerization regulates inward rectifier potassium channel activity (By similarity).</text>
</comment>
<comment type="catalytic activity">
    <reaction evidence="10">
        <text>K(+)(in) = K(+)(out)</text>
        <dbReference type="Rhea" id="RHEA:29463"/>
        <dbReference type="ChEBI" id="CHEBI:29103"/>
    </reaction>
</comment>
<comment type="subunit">
    <text evidence="1 3">The potassium channel is probably composed of a homo- or heterotetrameric complex of pore-forming alpha subunits that can associate with modulating beta subunits. Interacts with DNAJB12 and DNAJB14; chaperones DNAJB12 and DNAJB14 promote tetramerization (By similarity). Heteromultimer with KCNH6/ERG2 and KCNH7/ERG3 (By similarity). Interacts with ALG10B (By similarity). Forms a stable complex with KCNE1 or KCNE2, and that this heteromultimerization regulates Inward rectifier potassium channel activity. Interacts with CANX. The core-glycosylated, but not the fully glycosylated form interacts with RNF207. Interacts with NDFIP1 and NDFIP2; this interaction decreases the cell membrane expression by targeting KCNH2, through interaction with NEDD4L, for the degradation through the multivesicular bodies (MVBs)-lysosomal pathway (By similarity).</text>
</comment>
<comment type="subcellular location">
    <subcellularLocation>
        <location evidence="3">Cell membrane</location>
        <topology evidence="5">Multi-pass membrane protein</topology>
    </subcellularLocation>
</comment>
<comment type="tissue specificity">
    <text evidence="10">Highly expressed in left and right atria of the heart, in cortex and hippocampus; detected at intermediate levels in left and right ventricle, Purkinje fibers, cerebellum, thalamus and basal ganglia; detected at low levels in liver, spleen and kidney.</text>
</comment>
<comment type="domain">
    <text evidence="3">The S4-S5 linker acts as a signal integrator where it both couples voltage-sensor domain (VSD) movement to pore opening and closure, as well as providing a binding site for other domains that regulate activation and/or deactivation of the channel.</text>
</comment>
<comment type="PTM">
    <text evidence="3">Phosphorylated on serine and threonine residues. Phosphorylation by PKA inhibits ion conduction.</text>
</comment>
<comment type="similarity">
    <text evidence="13">Belongs to the potassium channel family. H (Eag) (TC 1.A.1.20) subfamily. Kv11.1/KCNH2 sub-subfamily.</text>
</comment>
<sequence length="1158" mass="126645">MPVRRGHVAPQNTFLDTIIRKFEGQSRKFIIANARVENCAVIYCNDGFCELCGYSRAEVMQRPCTCDFLHGPRTQRRAAAQIAQALLGAEERKVEIAFYRKDGSCFLCLVDVVPVKNEDGAVIMFILNFEVVMEKDMVGSPTHDTNHRGPPTSWLAPGRAKTFRLKLPALLALTTRESSARPGGVGSAGAPGAVVVDVDLSPAVPSRESLALDEVTAMDNHVAGLGPMEEQRALVGSSSPPAGAPEPLPSPRAHSLNPDASGSSCSLARTRSRESCASVRRASSADDIEAMRAGLPPPPRHASTGAMHPLRGGLLNSTSDSDLVRYRTISKIPQITLNFVDLKGDPFLASPTSDREIIAPKIKERTHNVTEKVTQVLSLGADVLPEYKLQAPRIHRWTILHYSPFKAVWDWLILLLVIYTAVFTPYSAAFLLKETEEGPPAPDCGYACQPLAVVDFIVDIMFIVDILINFRTTYVNANEEVVSHPGRIAVHYFKGWFLIDMVAAIPFDLLIFGSGSEELIGLLKTARLLRLVRVARKLDRYSEYGAAVLFLLMCTFALIAHWLACIWYAIGNMEQPHMDSRIGWLHNLGDQIGKPYNSSGLGGPSIKDKYVTALYFTFSSLTSVGFGNVSPNTNSEKIFSICVMLIGSLMYASIFGNVSAIIQRLYSGTARYHTQMLRVREFIRFHQIPNPLRQRLEEYFQHAWSYTNGIDMNAVLKGFPECLQADICLHLNRSLLQHCKPFRGATKGCLRALAMKFKTTHAPPGDTLVHAGDLLTALYFISRGSIEILRGDVVVAILGKNDIFGEPLNLYARPGKSNGDVRALTYCDLHKIHRDDLLEVLDMYPEFSDHFWSSLEITFNLRDTNMIPGSPGSAELEGGFNRQRKRKLSFRRRTDRDPEQPGEVSALGPGRAGAGPSGRGRPGGPWGESPSSGPSSPESSEDEGPGRSSSPLRLVPFSSPRPPGEPPGGEPLTEDGEKSSDTCNPLSGAFSGVSNIFSFWGDSRGHQYQELPRCPAPTPSLLNIPLSSPCRRPRGDVEGRLDALQRQLNRLETRLSADMATVLQLLQRQMTLIPPAYSAVTTPGPGPTSTSSLLPVSPIPTLTLDSLSQVSQFMAFEELPPGAPELPQDGPPRRLSLPGQLGALTSQPLHRHGSDPGS</sequence>
<reference key="1">
    <citation type="journal article" date="2001" name="Pflugers Arch.">
        <title>Molecular cloning and expression of cERG, the ether a go-go-related gene from canine myocardium.</title>
        <authorList>
            <person name="Zehelein J."/>
            <person name="Zhang W."/>
            <person name="Koenen M."/>
            <person name="Graf M."/>
            <person name="Heinemann S.H."/>
            <person name="Katus H.A."/>
        </authorList>
    </citation>
    <scope>NUCLEOTIDE SEQUENCE [MRNA]</scope>
    <scope>FUNCTION</scope>
    <scope>TRANSPORTER ACTIVITY$</scope>
    <scope>TISSUE SPECIFICITY</scope>
    <source>
        <tissue>Heart</tissue>
    </source>
</reference>
<reference key="2">
    <citation type="journal article" date="1997" name="Circ. Res.">
        <title>Tissue and species distribution of mRNA for the IKr-like K+ channel, erg.</title>
        <authorList>
            <person name="Wymore R.S."/>
            <person name="Gintant G.A."/>
            <person name="Wymore R.T."/>
            <person name="Dixon J.E."/>
            <person name="McKinnon D."/>
            <person name="Cohen I.S."/>
        </authorList>
    </citation>
    <scope>NUCLEOTIDE SEQUENCE [MRNA] OF 407-566</scope>
    <source>
        <tissue>Heart</tissue>
    </source>
</reference>
<reference key="3">
    <citation type="journal article" date="1999" name="Circ. Res.">
        <title>Molecular mechanisms underlying ionic remodeling in a dog model of atrial fibrillation.</title>
        <authorList>
            <person name="Yue L."/>
            <person name="Melnyk P."/>
            <person name="Gaspo R."/>
            <person name="Wang Z."/>
            <person name="Nattel S."/>
        </authorList>
    </citation>
    <scope>NUCLEOTIDE SEQUENCE [MRNA] OF 616-714</scope>
    <source>
        <tissue>Heart atrium</tissue>
    </source>
</reference>
<gene>
    <name evidence="3" type="primary">KCNH2</name>
    <name evidence="12" type="synonym">CERG</name>
    <name type="synonym">ERG</name>
</gene>
<organism>
    <name type="scientific">Canis lupus familiaris</name>
    <name type="common">Dog</name>
    <name type="synonym">Canis familiaris</name>
    <dbReference type="NCBI Taxonomy" id="9615"/>
    <lineage>
        <taxon>Eukaryota</taxon>
        <taxon>Metazoa</taxon>
        <taxon>Chordata</taxon>
        <taxon>Craniata</taxon>
        <taxon>Vertebrata</taxon>
        <taxon>Euteleostomi</taxon>
        <taxon>Mammalia</taxon>
        <taxon>Eutheria</taxon>
        <taxon>Laurasiatheria</taxon>
        <taxon>Carnivora</taxon>
        <taxon>Caniformia</taxon>
        <taxon>Canidae</taxon>
        <taxon>Canis</taxon>
    </lineage>
</organism>
<name>KCNH2_CANLF</name>
<feature type="chain" id="PRO_0000053997" description="Voltage-gated inwardly rectifying potassium channel KCNH2">
    <location>
        <begin position="1"/>
        <end position="1158"/>
    </location>
</feature>
<feature type="topological domain" description="Cytoplasmic" evidence="5">
    <location>
        <begin position="1"/>
        <end position="402"/>
    </location>
</feature>
<feature type="transmembrane region" description="Helical; Name=Segment S1" evidence="5">
    <location>
        <begin position="403"/>
        <end position="423"/>
    </location>
</feature>
<feature type="topological domain" description="Extracellular" evidence="5">
    <location>
        <begin position="424"/>
        <end position="449"/>
    </location>
</feature>
<feature type="transmembrane region" description="Helical; Name=Segment S2" evidence="5">
    <location>
        <begin position="450"/>
        <end position="470"/>
    </location>
</feature>
<feature type="topological domain" description="Cytoplasmic" evidence="5">
    <location>
        <begin position="471"/>
        <end position="494"/>
    </location>
</feature>
<feature type="transmembrane region" description="Helical; Name=Segment S3" evidence="5">
    <location>
        <begin position="495"/>
        <end position="515"/>
    </location>
</feature>
<feature type="topological domain" description="Extracellular" evidence="5">
    <location>
        <begin position="516"/>
        <end position="519"/>
    </location>
</feature>
<feature type="transmembrane region" description="Helical; Voltage-sensor; Name=Segment S4" evidence="5">
    <location>
        <begin position="520"/>
        <end position="540"/>
    </location>
</feature>
<feature type="topological domain" description="Cytoplasmic" evidence="5">
    <location>
        <begin position="541"/>
        <end position="546"/>
    </location>
</feature>
<feature type="transmembrane region" description="Helical; Name=Segment S5" evidence="5">
    <location>
        <begin position="547"/>
        <end position="567"/>
    </location>
</feature>
<feature type="topological domain" description="Extracellular" evidence="5">
    <location>
        <begin position="568"/>
        <end position="610"/>
    </location>
</feature>
<feature type="intramembrane region" description="Pore-forming; Name=Segment H5" evidence="5">
    <location>
        <begin position="611"/>
        <end position="631"/>
    </location>
</feature>
<feature type="topological domain" description="Extracellular" evidence="5">
    <location>
        <begin position="632"/>
        <end position="637"/>
    </location>
</feature>
<feature type="transmembrane region" description="Helical; Name=Segment S6" evidence="5">
    <location>
        <begin position="638"/>
        <end position="658"/>
    </location>
</feature>
<feature type="topological domain" description="Cytoplasmic" evidence="5">
    <location>
        <begin position="659"/>
        <end position="1158"/>
    </location>
</feature>
<feature type="domain" description="PAS" evidence="7">
    <location>
        <begin position="17"/>
        <end position="88"/>
    </location>
</feature>
<feature type="domain" description="PAC" evidence="8">
    <location>
        <begin position="92"/>
        <end position="144"/>
    </location>
</feature>
<feature type="region of interest" description="Disordered" evidence="9">
    <location>
        <begin position="232"/>
        <end position="314"/>
    </location>
</feature>
<feature type="region of interest" description="cNMP-binding domain" evidence="6">
    <location>
        <begin position="741"/>
        <end position="841"/>
    </location>
</feature>
<feature type="region of interest" description="Disordered" evidence="9">
    <location>
        <begin position="869"/>
        <end position="987"/>
    </location>
</feature>
<feature type="region of interest" description="Disordered" evidence="9">
    <location>
        <begin position="1116"/>
        <end position="1158"/>
    </location>
</feature>
<feature type="coiled-coil region" evidence="5">
    <location>
        <begin position="1034"/>
        <end position="1061"/>
    </location>
</feature>
<feature type="short sequence motif" description="Selectivity filter" evidence="4">
    <location>
        <begin position="623"/>
        <end position="628"/>
    </location>
</feature>
<feature type="compositionally biased region" description="Polar residues" evidence="9">
    <location>
        <begin position="258"/>
        <end position="269"/>
    </location>
</feature>
<feature type="compositionally biased region" description="Basic residues" evidence="9">
    <location>
        <begin position="882"/>
        <end position="891"/>
    </location>
</feature>
<feature type="compositionally biased region" description="Gly residues" evidence="9">
    <location>
        <begin position="910"/>
        <end position="926"/>
    </location>
</feature>
<feature type="compositionally biased region" description="Low complexity" evidence="9">
    <location>
        <begin position="927"/>
        <end position="938"/>
    </location>
</feature>
<feature type="compositionally biased region" description="Pro residues" evidence="9">
    <location>
        <begin position="959"/>
        <end position="969"/>
    </location>
</feature>
<feature type="modified residue" description="Phosphoserine" evidence="3">
    <location>
        <position position="239"/>
    </location>
</feature>
<feature type="modified residue" description="Phosphoserine" evidence="2">
    <location>
        <position position="283"/>
    </location>
</feature>
<feature type="modified residue" description="Phosphoserine" evidence="2">
    <location>
        <position position="284"/>
    </location>
</feature>
<feature type="modified residue" description="Phosphoserine" evidence="3">
    <location>
        <position position="319"/>
    </location>
</feature>
<feature type="modified residue" description="Phosphoserine" evidence="1">
    <location>
        <position position="350"/>
    </location>
</feature>
<feature type="modified residue" description="Phosphoserine" evidence="3">
    <location>
        <position position="870"/>
    </location>
</feature>
<feature type="modified residue" description="Phosphoserine" evidence="2">
    <location>
        <position position="873"/>
    </location>
</feature>
<feature type="modified residue" description="Omega-N-methylarginine" evidence="2">
    <location>
        <position position="1013"/>
    </location>
</feature>
<feature type="modified residue" description="Phosphoserine" evidence="3">
    <location>
        <position position="1136"/>
    </location>
</feature>
<feature type="glycosylation site" description="N-linked (GlcNAc...) asparagine" evidence="5">
    <location>
        <position position="597"/>
    </location>
</feature>
<feature type="sequence conflict" description="In Ref. 2; AAC48722." evidence="13" ref="2">
    <original>P</original>
    <variation>T</variation>
    <location>
        <position position="442"/>
    </location>
</feature>